<gene>
    <name type="primary">BMT2</name>
    <name type="ordered locus">PP7435_Chr4-0530</name>
</gene>
<feature type="chain" id="PRO_0000426101" description="Beta-mannosyltransferase 2">
    <location>
        <begin position="1"/>
        <end position="635"/>
    </location>
</feature>
<feature type="topological domain" description="Cytoplasmic" evidence="2">
    <location>
        <begin position="1"/>
        <end position="6"/>
    </location>
</feature>
<feature type="transmembrane region" description="Helical" evidence="2">
    <location>
        <begin position="7"/>
        <end position="27"/>
    </location>
</feature>
<feature type="topological domain" description="Extracellular" evidence="2">
    <location>
        <begin position="28"/>
        <end position="635"/>
    </location>
</feature>
<feature type="region of interest" description="Disordered" evidence="3">
    <location>
        <begin position="517"/>
        <end position="635"/>
    </location>
</feature>
<feature type="coiled-coil region" evidence="2">
    <location>
        <begin position="512"/>
        <end position="635"/>
    </location>
</feature>
<feature type="glycosylation site" description="N-linked (GlcNAc...) asparagine" evidence="2">
    <location>
        <position position="484"/>
    </location>
</feature>
<organism>
    <name type="scientific">Komagataella phaffii (strain ATCC 76273 / CBS 7435 / CECT 11047 / NRRL Y-11430 / Wegner 21-1)</name>
    <name type="common">Yeast</name>
    <name type="synonym">Pichia pastoris</name>
    <dbReference type="NCBI Taxonomy" id="981350"/>
    <lineage>
        <taxon>Eukaryota</taxon>
        <taxon>Fungi</taxon>
        <taxon>Dikarya</taxon>
        <taxon>Ascomycota</taxon>
        <taxon>Saccharomycotina</taxon>
        <taxon>Pichiomycetes</taxon>
        <taxon>Pichiales</taxon>
        <taxon>Pichiaceae</taxon>
        <taxon>Komagataella</taxon>
    </lineage>
</organism>
<dbReference type="EC" id="2.4.1.-"/>
<dbReference type="EMBL" id="FR839631">
    <property type="protein sequence ID" value="CCA40694.1"/>
    <property type="molecule type" value="Genomic_DNA"/>
</dbReference>
<dbReference type="SMR" id="F2QZ66"/>
<dbReference type="CAZy" id="GT91">
    <property type="family name" value="Glycosyltransferase Family 91"/>
</dbReference>
<dbReference type="GlyCosmos" id="F2QZ66">
    <property type="glycosylation" value="1 site, No reported glycans"/>
</dbReference>
<dbReference type="HOGENOM" id="CLU_013841_2_1_1"/>
<dbReference type="Proteomes" id="UP000006853">
    <property type="component" value="Chromosome 4"/>
</dbReference>
<dbReference type="GO" id="GO:0016020">
    <property type="term" value="C:membrane"/>
    <property type="evidence" value="ECO:0007669"/>
    <property type="project" value="UniProtKB-SubCell"/>
</dbReference>
<dbReference type="GO" id="GO:0015630">
    <property type="term" value="C:microtubule cytoskeleton"/>
    <property type="evidence" value="ECO:0007669"/>
    <property type="project" value="TreeGrafter"/>
</dbReference>
<dbReference type="GO" id="GO:0000030">
    <property type="term" value="F:mannosyltransferase activity"/>
    <property type="evidence" value="ECO:0007669"/>
    <property type="project" value="InterPro"/>
</dbReference>
<dbReference type="GO" id="GO:0071555">
    <property type="term" value="P:cell wall organization"/>
    <property type="evidence" value="ECO:0007669"/>
    <property type="project" value="UniProtKB-KW"/>
</dbReference>
<dbReference type="GO" id="GO:0000226">
    <property type="term" value="P:microtubule cytoskeleton organization"/>
    <property type="evidence" value="ECO:0007669"/>
    <property type="project" value="TreeGrafter"/>
</dbReference>
<dbReference type="InterPro" id="IPR021988">
    <property type="entry name" value="BMT1"/>
</dbReference>
<dbReference type="InterPro" id="IPR051483">
    <property type="entry name" value="MAP7_domain-containing"/>
</dbReference>
<dbReference type="PANTHER" id="PTHR15073">
    <property type="entry name" value="MICROTUBULE-ASSOCIATED PROTEIN"/>
    <property type="match status" value="1"/>
</dbReference>
<dbReference type="PANTHER" id="PTHR15073:SF1">
    <property type="entry name" value="RETICULOCYTE-BINDING PROTEIN HOMOLOG 2A"/>
    <property type="match status" value="1"/>
</dbReference>
<dbReference type="Pfam" id="PF12141">
    <property type="entry name" value="BMT"/>
    <property type="match status" value="2"/>
</dbReference>
<accession>F2QZ66</accession>
<keyword id="KW-0961">Cell wall biogenesis/degradation</keyword>
<keyword id="KW-0175">Coiled coil</keyword>
<keyword id="KW-0325">Glycoprotein</keyword>
<keyword id="KW-0328">Glycosyltransferase</keyword>
<keyword id="KW-0472">Membrane</keyword>
<keyword id="KW-0735">Signal-anchor</keyword>
<keyword id="KW-0808">Transferase</keyword>
<keyword id="KW-0812">Transmembrane</keyword>
<keyword id="KW-1133">Transmembrane helix</keyword>
<protein>
    <recommendedName>
        <fullName>Beta-mannosyltransferase 2</fullName>
        <ecNumber>2.4.1.-</ecNumber>
    </recommendedName>
</protein>
<evidence type="ECO:0000250" key="1"/>
<evidence type="ECO:0000255" key="2"/>
<evidence type="ECO:0000256" key="3">
    <source>
        <dbReference type="SAM" id="MobiDB-lite"/>
    </source>
</evidence>
<evidence type="ECO:0000305" key="4"/>
<proteinExistence type="inferred from homology"/>
<comment type="function">
    <text evidence="1">Beta-mannosyltransferase involved in cell wall biosynthesis. Initiates the beta-mannosylation of core N-linked glycans (By similarity).</text>
</comment>
<comment type="subcellular location">
    <subcellularLocation>
        <location evidence="4">Membrane</location>
        <topology evidence="4">Single-pass type II membrane protein</topology>
    </subcellularLocation>
</comment>
<comment type="similarity">
    <text evidence="4">Belongs to the BMT family.</text>
</comment>
<sequence length="635" mass="73436">MRTRLNFLLLCIASVLSVIWIGVLLTWNDNNLGGISLNGGKDSAYDDLLSLGSFNDMEVDSYVTNIYDNAPVLGCTDLSYHGLLKVTPKHDLACDLEFIRAQILDIDVYSAIKDLEDKALTVKQKVEKHWFTFYGSSVFLPEHDVHYLVRRVIFSAEGKANSPVTSIIVAQIYDKNWNELNGHFLDILNPNTGKVQHNTFPQVLPIATNFVKGKKFRGAEDPRVVLRKGRFGPDPLVMFNSLTQDNKRRRIFTISPFDQFKTVMYDIKDYEMPRYEKNWVPFFLKDNQEAVHFVYSFNPLRVLKCSLDDGSCDIVFEIPKVDSMSSELRGATPMINLPQAIPMAKDKEIWVSFPRTRIANCGCSRTTYRPMLMLFVREGSNFFVELLSTSLDFGLEVLPYSGNGLPCSADHSVLIPNSIDNWEVVDSNGDDILTLSFSEADKSTSVIHIRGLYNYLSELDGYQGPEAEDEHNFQRILSDLHFDNKTTVNNFIKVQSCALDAAKGYCKEYGLTRGEAERRRRVAEERKKKEKEEEEKKKKKEKEEEEKKRIEEEKKKIEEKERKEKEKEEAERKKLQEMKKKLEEITEKLEKGQRNKEIDPKEKQREEEERKERVRKIAEKQRKEAEKKEAEKKGK</sequence>
<reference key="1">
    <citation type="journal article" date="2011" name="J. Biotechnol.">
        <title>High-quality genome sequence of Pichia pastoris CBS7435.</title>
        <authorList>
            <person name="Kueberl A."/>
            <person name="Schneider J."/>
            <person name="Thallinger G.G."/>
            <person name="Anderl I."/>
            <person name="Wibberg D."/>
            <person name="Hajek T."/>
            <person name="Jaenicke S."/>
            <person name="Brinkrolf K."/>
            <person name="Goesmann A."/>
            <person name="Szczepanowski R."/>
            <person name="Puehler A."/>
            <person name="Schwab H."/>
            <person name="Glieder A."/>
            <person name="Pichler H."/>
        </authorList>
    </citation>
    <scope>NUCLEOTIDE SEQUENCE [LARGE SCALE GENOMIC DNA]</scope>
    <source>
        <strain>ATCC 76273 / CBS 7435 / CECT 11047 / NRRL Y-11430 / Wegner 21-1</strain>
    </source>
</reference>
<reference key="2">
    <citation type="journal article" date="2016" name="FEMS Yeast Res.">
        <title>Curation of the genome annotation of Pichia pastoris (Komagataella phaffii) CBS7435 from gene level to protein function.</title>
        <authorList>
            <person name="Valli M."/>
            <person name="Tatto N.E."/>
            <person name="Peymann A."/>
            <person name="Gruber C."/>
            <person name="Landes N."/>
            <person name="Ekker H."/>
            <person name="Thallinger G.G."/>
            <person name="Mattanovich D."/>
            <person name="Gasser B."/>
            <person name="Graf A.B."/>
        </authorList>
    </citation>
    <scope>GENOME REANNOTATION</scope>
    <source>
        <strain>ATCC 76273 / CBS 7435 / CECT 11047 / NRRL Y-11430 / Wegner 21-1</strain>
    </source>
</reference>
<name>BMT2_KOMPC</name>